<organism>
    <name type="scientific">Mus musculus</name>
    <name type="common">Mouse</name>
    <dbReference type="NCBI Taxonomy" id="10090"/>
    <lineage>
        <taxon>Eukaryota</taxon>
        <taxon>Metazoa</taxon>
        <taxon>Chordata</taxon>
        <taxon>Craniata</taxon>
        <taxon>Vertebrata</taxon>
        <taxon>Euteleostomi</taxon>
        <taxon>Mammalia</taxon>
        <taxon>Eutheria</taxon>
        <taxon>Euarchontoglires</taxon>
        <taxon>Glires</taxon>
        <taxon>Rodentia</taxon>
        <taxon>Myomorpha</taxon>
        <taxon>Muroidea</taxon>
        <taxon>Muridae</taxon>
        <taxon>Murinae</taxon>
        <taxon>Mus</taxon>
        <taxon>Mus</taxon>
    </lineage>
</organism>
<reference key="1">
    <citation type="journal article" date="2005" name="Science">
        <title>The transcriptional landscape of the mammalian genome.</title>
        <authorList>
            <person name="Carninci P."/>
            <person name="Kasukawa T."/>
            <person name="Katayama S."/>
            <person name="Gough J."/>
            <person name="Frith M.C."/>
            <person name="Maeda N."/>
            <person name="Oyama R."/>
            <person name="Ravasi T."/>
            <person name="Lenhard B."/>
            <person name="Wells C."/>
            <person name="Kodzius R."/>
            <person name="Shimokawa K."/>
            <person name="Bajic V.B."/>
            <person name="Brenner S.E."/>
            <person name="Batalov S."/>
            <person name="Forrest A.R."/>
            <person name="Zavolan M."/>
            <person name="Davis M.J."/>
            <person name="Wilming L.G."/>
            <person name="Aidinis V."/>
            <person name="Allen J.E."/>
            <person name="Ambesi-Impiombato A."/>
            <person name="Apweiler R."/>
            <person name="Aturaliya R.N."/>
            <person name="Bailey T.L."/>
            <person name="Bansal M."/>
            <person name="Baxter L."/>
            <person name="Beisel K.W."/>
            <person name="Bersano T."/>
            <person name="Bono H."/>
            <person name="Chalk A.M."/>
            <person name="Chiu K.P."/>
            <person name="Choudhary V."/>
            <person name="Christoffels A."/>
            <person name="Clutterbuck D.R."/>
            <person name="Crowe M.L."/>
            <person name="Dalla E."/>
            <person name="Dalrymple B.P."/>
            <person name="de Bono B."/>
            <person name="Della Gatta G."/>
            <person name="di Bernardo D."/>
            <person name="Down T."/>
            <person name="Engstrom P."/>
            <person name="Fagiolini M."/>
            <person name="Faulkner G."/>
            <person name="Fletcher C.F."/>
            <person name="Fukushima T."/>
            <person name="Furuno M."/>
            <person name="Futaki S."/>
            <person name="Gariboldi M."/>
            <person name="Georgii-Hemming P."/>
            <person name="Gingeras T.R."/>
            <person name="Gojobori T."/>
            <person name="Green R.E."/>
            <person name="Gustincich S."/>
            <person name="Harbers M."/>
            <person name="Hayashi Y."/>
            <person name="Hensch T.K."/>
            <person name="Hirokawa N."/>
            <person name="Hill D."/>
            <person name="Huminiecki L."/>
            <person name="Iacono M."/>
            <person name="Ikeo K."/>
            <person name="Iwama A."/>
            <person name="Ishikawa T."/>
            <person name="Jakt M."/>
            <person name="Kanapin A."/>
            <person name="Katoh M."/>
            <person name="Kawasawa Y."/>
            <person name="Kelso J."/>
            <person name="Kitamura H."/>
            <person name="Kitano H."/>
            <person name="Kollias G."/>
            <person name="Krishnan S.P."/>
            <person name="Kruger A."/>
            <person name="Kummerfeld S.K."/>
            <person name="Kurochkin I.V."/>
            <person name="Lareau L.F."/>
            <person name="Lazarevic D."/>
            <person name="Lipovich L."/>
            <person name="Liu J."/>
            <person name="Liuni S."/>
            <person name="McWilliam S."/>
            <person name="Madan Babu M."/>
            <person name="Madera M."/>
            <person name="Marchionni L."/>
            <person name="Matsuda H."/>
            <person name="Matsuzawa S."/>
            <person name="Miki H."/>
            <person name="Mignone F."/>
            <person name="Miyake S."/>
            <person name="Morris K."/>
            <person name="Mottagui-Tabar S."/>
            <person name="Mulder N."/>
            <person name="Nakano N."/>
            <person name="Nakauchi H."/>
            <person name="Ng P."/>
            <person name="Nilsson R."/>
            <person name="Nishiguchi S."/>
            <person name="Nishikawa S."/>
            <person name="Nori F."/>
            <person name="Ohara O."/>
            <person name="Okazaki Y."/>
            <person name="Orlando V."/>
            <person name="Pang K.C."/>
            <person name="Pavan W.J."/>
            <person name="Pavesi G."/>
            <person name="Pesole G."/>
            <person name="Petrovsky N."/>
            <person name="Piazza S."/>
            <person name="Reed J."/>
            <person name="Reid J.F."/>
            <person name="Ring B.Z."/>
            <person name="Ringwald M."/>
            <person name="Rost B."/>
            <person name="Ruan Y."/>
            <person name="Salzberg S.L."/>
            <person name="Sandelin A."/>
            <person name="Schneider C."/>
            <person name="Schoenbach C."/>
            <person name="Sekiguchi K."/>
            <person name="Semple C.A."/>
            <person name="Seno S."/>
            <person name="Sessa L."/>
            <person name="Sheng Y."/>
            <person name="Shibata Y."/>
            <person name="Shimada H."/>
            <person name="Shimada K."/>
            <person name="Silva D."/>
            <person name="Sinclair B."/>
            <person name="Sperling S."/>
            <person name="Stupka E."/>
            <person name="Sugiura K."/>
            <person name="Sultana R."/>
            <person name="Takenaka Y."/>
            <person name="Taki K."/>
            <person name="Tammoja K."/>
            <person name="Tan S.L."/>
            <person name="Tang S."/>
            <person name="Taylor M.S."/>
            <person name="Tegner J."/>
            <person name="Teichmann S.A."/>
            <person name="Ueda H.R."/>
            <person name="van Nimwegen E."/>
            <person name="Verardo R."/>
            <person name="Wei C.L."/>
            <person name="Yagi K."/>
            <person name="Yamanishi H."/>
            <person name="Zabarovsky E."/>
            <person name="Zhu S."/>
            <person name="Zimmer A."/>
            <person name="Hide W."/>
            <person name="Bult C."/>
            <person name="Grimmond S.M."/>
            <person name="Teasdale R.D."/>
            <person name="Liu E.T."/>
            <person name="Brusic V."/>
            <person name="Quackenbush J."/>
            <person name="Wahlestedt C."/>
            <person name="Mattick J.S."/>
            <person name="Hume D.A."/>
            <person name="Kai C."/>
            <person name="Sasaki D."/>
            <person name="Tomaru Y."/>
            <person name="Fukuda S."/>
            <person name="Kanamori-Katayama M."/>
            <person name="Suzuki M."/>
            <person name="Aoki J."/>
            <person name="Arakawa T."/>
            <person name="Iida J."/>
            <person name="Imamura K."/>
            <person name="Itoh M."/>
            <person name="Kato T."/>
            <person name="Kawaji H."/>
            <person name="Kawagashira N."/>
            <person name="Kawashima T."/>
            <person name="Kojima M."/>
            <person name="Kondo S."/>
            <person name="Konno H."/>
            <person name="Nakano K."/>
            <person name="Ninomiya N."/>
            <person name="Nishio T."/>
            <person name="Okada M."/>
            <person name="Plessy C."/>
            <person name="Shibata K."/>
            <person name="Shiraki T."/>
            <person name="Suzuki S."/>
            <person name="Tagami M."/>
            <person name="Waki K."/>
            <person name="Watahiki A."/>
            <person name="Okamura-Oho Y."/>
            <person name="Suzuki H."/>
            <person name="Kawai J."/>
            <person name="Hayashizaki Y."/>
        </authorList>
    </citation>
    <scope>NUCLEOTIDE SEQUENCE [LARGE SCALE MRNA] (ISOFORM 2)</scope>
    <source>
        <strain>C57BL/6J</strain>
        <tissue>Inner ear</tissue>
    </source>
</reference>
<reference key="2">
    <citation type="journal article" date="2009" name="PLoS Biol.">
        <title>Lineage-specific biology revealed by a finished genome assembly of the mouse.</title>
        <authorList>
            <person name="Church D.M."/>
            <person name="Goodstadt L."/>
            <person name="Hillier L.W."/>
            <person name="Zody M.C."/>
            <person name="Goldstein S."/>
            <person name="She X."/>
            <person name="Bult C.J."/>
            <person name="Agarwala R."/>
            <person name="Cherry J.L."/>
            <person name="DiCuccio M."/>
            <person name="Hlavina W."/>
            <person name="Kapustin Y."/>
            <person name="Meric P."/>
            <person name="Maglott D."/>
            <person name="Birtle Z."/>
            <person name="Marques A.C."/>
            <person name="Graves T."/>
            <person name="Zhou S."/>
            <person name="Teague B."/>
            <person name="Potamousis K."/>
            <person name="Churas C."/>
            <person name="Place M."/>
            <person name="Herschleb J."/>
            <person name="Runnheim R."/>
            <person name="Forrest D."/>
            <person name="Amos-Landgraf J."/>
            <person name="Schwartz D.C."/>
            <person name="Cheng Z."/>
            <person name="Lindblad-Toh K."/>
            <person name="Eichler E.E."/>
            <person name="Ponting C.P."/>
        </authorList>
    </citation>
    <scope>NUCLEOTIDE SEQUENCE [LARGE SCALE GENOMIC DNA]</scope>
    <source>
        <strain>C57BL/6J</strain>
    </source>
</reference>
<reference key="3">
    <citation type="journal article" date="2004" name="Genome Res.">
        <title>The status, quality, and expansion of the NIH full-length cDNA project: the Mammalian Gene Collection (MGC).</title>
        <authorList>
            <consortium name="The MGC Project Team"/>
        </authorList>
    </citation>
    <scope>NUCLEOTIDE SEQUENCE [LARGE SCALE MRNA] (ISOFORM 1)</scope>
    <source>
        <tissue>Brain</tissue>
    </source>
</reference>
<reference key="4">
    <citation type="journal article" date="2015" name="J. Cell Biol.">
        <title>RUN and FYVE domain-containing protein 4 enhances autophagy and lysosome tethering in response to Interleukin-4.</title>
        <authorList>
            <person name="Terawaki S."/>
            <person name="Camosseto V."/>
            <person name="Prete F."/>
            <person name="Wenger T."/>
            <person name="Papadopoulos A."/>
            <person name="Rondeau C."/>
            <person name="Combes A."/>
            <person name="Rodriguez Rodrigues C."/>
            <person name="Vu Manh T.P."/>
            <person name="Fallet M."/>
            <person name="English L."/>
            <person name="Santamaria R."/>
            <person name="Soares A.R."/>
            <person name="Weil T."/>
            <person name="Hammad H."/>
            <person name="Desjardins M."/>
            <person name="Gorvel J.P."/>
            <person name="Santos M.A."/>
            <person name="Gatti E."/>
            <person name="Pierre P."/>
        </authorList>
    </citation>
    <scope>TISSUE SPECIFICITY</scope>
    <scope>INDUCTION</scope>
</reference>
<reference key="5">
    <citation type="journal article" date="2024" name="Bone Res.">
        <title>RUFY4 deletion prevents pathological bone loss by blocking endo-lysosomal trafficking of osteoclasts.</title>
        <authorList>
            <person name="Kim M."/>
            <person name="Park J.H."/>
            <person name="Go M."/>
            <person name="Lee N."/>
            <person name="Seo J."/>
            <person name="Lee H."/>
            <person name="Kim D."/>
            <person name="Ha H."/>
            <person name="Kim T."/>
            <person name="Jeong M.S."/>
            <person name="Kim S."/>
            <person name="Kim T."/>
            <person name="Kim H.S."/>
            <person name="Kang D."/>
            <person name="Shim H."/>
            <person name="Lee S.Y."/>
        </authorList>
    </citation>
    <scope>FUNCTION</scope>
    <scope>HOMODIMERIZATION</scope>
    <scope>INTERACTION WITH RAB7A AND LAMP2</scope>
    <scope>DISRUPTION PHENOTYPE</scope>
</reference>
<evidence type="ECO:0000250" key="1">
    <source>
        <dbReference type="UniProtKB" id="Q6ZNE9"/>
    </source>
</evidence>
<evidence type="ECO:0000255" key="2"/>
<evidence type="ECO:0000255" key="3">
    <source>
        <dbReference type="PROSITE-ProRule" id="PRU00091"/>
    </source>
</evidence>
<evidence type="ECO:0000255" key="4">
    <source>
        <dbReference type="PROSITE-ProRule" id="PRU00178"/>
    </source>
</evidence>
<evidence type="ECO:0000256" key="5">
    <source>
        <dbReference type="SAM" id="MobiDB-lite"/>
    </source>
</evidence>
<evidence type="ECO:0000269" key="6">
    <source>
    </source>
</evidence>
<evidence type="ECO:0000269" key="7">
    <source>
    </source>
</evidence>
<evidence type="ECO:0000303" key="8">
    <source>
    </source>
</evidence>
<evidence type="ECO:0000305" key="9"/>
<dbReference type="EMBL" id="AK158260">
    <property type="protein sequence ID" value="BAE34432.1"/>
    <property type="molecule type" value="mRNA"/>
</dbReference>
<dbReference type="EMBL" id="AC117757">
    <property type="status" value="NOT_ANNOTATED_CDS"/>
    <property type="molecule type" value="Genomic_DNA"/>
</dbReference>
<dbReference type="EMBL" id="BC150907">
    <property type="protein sequence ID" value="AAI50908.1"/>
    <property type="molecule type" value="mRNA"/>
</dbReference>
<dbReference type="EMBL" id="BC150910">
    <property type="protein sequence ID" value="AAI50911.1"/>
    <property type="molecule type" value="mRNA"/>
</dbReference>
<dbReference type="CCDS" id="CCDS15039.1">
    <molecule id="Q3TYX8-2"/>
</dbReference>
<dbReference type="CCDS" id="CCDS48289.1">
    <molecule id="Q3TYX8-1"/>
</dbReference>
<dbReference type="RefSeq" id="NP_001029232.2">
    <molecule id="Q3TYX8-2"/>
    <property type="nucleotide sequence ID" value="NM_001034060.4"/>
</dbReference>
<dbReference type="RefSeq" id="NP_001164112.1">
    <molecule id="Q3TYX8-1"/>
    <property type="nucleotide sequence ID" value="NM_001170641.2"/>
</dbReference>
<dbReference type="RefSeq" id="NP_001418175.1">
    <molecule id="Q3TYX8-1"/>
    <property type="nucleotide sequence ID" value="NM_001431246.1"/>
</dbReference>
<dbReference type="SMR" id="Q3TYX8"/>
<dbReference type="FunCoup" id="Q3TYX8">
    <property type="interactions" value="36"/>
</dbReference>
<dbReference type="STRING" id="10090.ENSMUSP00000115873"/>
<dbReference type="iPTMnet" id="Q3TYX8"/>
<dbReference type="PhosphoSitePlus" id="Q3TYX8"/>
<dbReference type="PaxDb" id="10090-ENSMUSP00000115873"/>
<dbReference type="ProteomicsDB" id="260956">
    <molecule id="Q3TYX8-1"/>
</dbReference>
<dbReference type="ProteomicsDB" id="260957">
    <molecule id="Q3TYX8-2"/>
</dbReference>
<dbReference type="Antibodypedia" id="34256">
    <property type="antibodies" value="53 antibodies from 17 providers"/>
</dbReference>
<dbReference type="Ensembl" id="ENSMUST00000080167.11">
    <molecule id="Q3TYX8-2"/>
    <property type="protein sequence ID" value="ENSMUSP00000079062.5"/>
    <property type="gene ID" value="ENSMUSG00000061815.12"/>
</dbReference>
<dbReference type="Ensembl" id="ENSMUST00000127134.2">
    <molecule id="Q3TYX8-1"/>
    <property type="protein sequence ID" value="ENSMUSP00000115873.2"/>
    <property type="gene ID" value="ENSMUSG00000061815.12"/>
</dbReference>
<dbReference type="GeneID" id="435626"/>
<dbReference type="KEGG" id="mmu:435626"/>
<dbReference type="UCSC" id="uc007blk.2">
    <molecule id="Q3TYX8-1"/>
    <property type="organism name" value="mouse"/>
</dbReference>
<dbReference type="AGR" id="MGI:3588214"/>
<dbReference type="CTD" id="285180"/>
<dbReference type="MGI" id="MGI:3588214">
    <property type="gene designation" value="Rufy4"/>
</dbReference>
<dbReference type="VEuPathDB" id="HostDB:ENSMUSG00000061815"/>
<dbReference type="eggNOG" id="KOG1729">
    <property type="taxonomic scope" value="Eukaryota"/>
</dbReference>
<dbReference type="GeneTree" id="ENSGT00940000154044"/>
<dbReference type="HOGENOM" id="CLU_037214_0_0_1"/>
<dbReference type="InParanoid" id="Q3TYX8"/>
<dbReference type="OMA" id="APGCCVG"/>
<dbReference type="OrthoDB" id="9044749at2759"/>
<dbReference type="PhylomeDB" id="Q3TYX8"/>
<dbReference type="TreeFam" id="TF341788"/>
<dbReference type="BioGRID-ORCS" id="435626">
    <property type="hits" value="3 hits in 78 CRISPR screens"/>
</dbReference>
<dbReference type="PRO" id="PR:Q3TYX8"/>
<dbReference type="Proteomes" id="UP000000589">
    <property type="component" value="Chromosome 1"/>
</dbReference>
<dbReference type="RNAct" id="Q3TYX8">
    <property type="molecule type" value="protein"/>
</dbReference>
<dbReference type="Bgee" id="ENSMUSG00000061815">
    <property type="expression patterns" value="Expressed in granulocyte and 30 other cell types or tissues"/>
</dbReference>
<dbReference type="GO" id="GO:0005776">
    <property type="term" value="C:autophagosome"/>
    <property type="evidence" value="ECO:0000250"/>
    <property type="project" value="UniProtKB"/>
</dbReference>
<dbReference type="GO" id="GO:0036019">
    <property type="term" value="C:endolysosome"/>
    <property type="evidence" value="ECO:0000250"/>
    <property type="project" value="UniProtKB"/>
</dbReference>
<dbReference type="GO" id="GO:0034452">
    <property type="term" value="F:dynactin binding"/>
    <property type="evidence" value="ECO:0000250"/>
    <property type="project" value="UniProtKB"/>
</dbReference>
<dbReference type="GO" id="GO:0032266">
    <property type="term" value="F:phosphatidylinositol-3-phosphate binding"/>
    <property type="evidence" value="ECO:0000250"/>
    <property type="project" value="UniProtKB"/>
</dbReference>
<dbReference type="GO" id="GO:0008270">
    <property type="term" value="F:zinc ion binding"/>
    <property type="evidence" value="ECO:0007669"/>
    <property type="project" value="UniProtKB-KW"/>
</dbReference>
<dbReference type="GO" id="GO:0000045">
    <property type="term" value="P:autophagosome assembly"/>
    <property type="evidence" value="ECO:0000250"/>
    <property type="project" value="UniProtKB"/>
</dbReference>
<dbReference type="GO" id="GO:0071353">
    <property type="term" value="P:cellular response to interleukin-4"/>
    <property type="evidence" value="ECO:0000314"/>
    <property type="project" value="UniProtKB"/>
</dbReference>
<dbReference type="GO" id="GO:0061763">
    <property type="term" value="P:multivesicular body-lysosome fusion"/>
    <property type="evidence" value="ECO:0000315"/>
    <property type="project" value="UniProtKB"/>
</dbReference>
<dbReference type="GO" id="GO:0045780">
    <property type="term" value="P:positive regulation of bone resorption"/>
    <property type="evidence" value="ECO:0000315"/>
    <property type="project" value="UniProtKB"/>
</dbReference>
<dbReference type="GO" id="GO:0045921">
    <property type="term" value="P:positive regulation of exocytosis"/>
    <property type="evidence" value="ECO:0000315"/>
    <property type="project" value="UniProtKB"/>
</dbReference>
<dbReference type="GO" id="GO:0016239">
    <property type="term" value="P:positive regulation of macroautophagy"/>
    <property type="evidence" value="ECO:0000250"/>
    <property type="project" value="UniProtKB"/>
</dbReference>
<dbReference type="GO" id="GO:2001019">
    <property type="term" value="P:positive regulation of retrograde axon cargo transport"/>
    <property type="evidence" value="ECO:0000250"/>
    <property type="project" value="UniProtKB"/>
</dbReference>
<dbReference type="CDD" id="cd15745">
    <property type="entry name" value="FYVE_RUFY4"/>
    <property type="match status" value="1"/>
</dbReference>
<dbReference type="FunFam" id="1.20.58.900:FF:000015">
    <property type="entry name" value="RUN and FYVE domain containing 4"/>
    <property type="match status" value="1"/>
</dbReference>
<dbReference type="Gene3D" id="1.20.58.900">
    <property type="match status" value="1"/>
</dbReference>
<dbReference type="Gene3D" id="3.30.40.10">
    <property type="entry name" value="Zinc/RING finger domain, C3HC4 (zinc finger)"/>
    <property type="match status" value="1"/>
</dbReference>
<dbReference type="InterPro" id="IPR042939">
    <property type="entry name" value="RUFY4"/>
</dbReference>
<dbReference type="InterPro" id="IPR004012">
    <property type="entry name" value="Run_dom"/>
</dbReference>
<dbReference type="InterPro" id="IPR037213">
    <property type="entry name" value="Run_dom_sf"/>
</dbReference>
<dbReference type="InterPro" id="IPR017455">
    <property type="entry name" value="Znf_FYVE-rel"/>
</dbReference>
<dbReference type="InterPro" id="IPR011011">
    <property type="entry name" value="Znf_FYVE_PHD"/>
</dbReference>
<dbReference type="InterPro" id="IPR013083">
    <property type="entry name" value="Znf_RING/FYVE/PHD"/>
</dbReference>
<dbReference type="PANTHER" id="PTHR47732">
    <property type="entry name" value="RUN AND FYVE DOMAIN-CONTAINING PROTEIN 4"/>
    <property type="match status" value="1"/>
</dbReference>
<dbReference type="PANTHER" id="PTHR47732:SF1">
    <property type="entry name" value="RUN AND FYVE DOMAIN-CONTAINING PROTEIN 4"/>
    <property type="match status" value="1"/>
</dbReference>
<dbReference type="Pfam" id="PF25366">
    <property type="entry name" value="RUFY4"/>
    <property type="match status" value="1"/>
</dbReference>
<dbReference type="Pfam" id="PF02759">
    <property type="entry name" value="RUN"/>
    <property type="match status" value="1"/>
</dbReference>
<dbReference type="SMART" id="SM00593">
    <property type="entry name" value="RUN"/>
    <property type="match status" value="1"/>
</dbReference>
<dbReference type="SUPFAM" id="SSF57903">
    <property type="entry name" value="FYVE/PHD zinc finger"/>
    <property type="match status" value="1"/>
</dbReference>
<dbReference type="SUPFAM" id="SSF140741">
    <property type="entry name" value="RUN domain-like"/>
    <property type="match status" value="1"/>
</dbReference>
<dbReference type="PROSITE" id="PS50826">
    <property type="entry name" value="RUN"/>
    <property type="match status" value="1"/>
</dbReference>
<dbReference type="PROSITE" id="PS50178">
    <property type="entry name" value="ZF_FYVE"/>
    <property type="match status" value="1"/>
</dbReference>
<keyword id="KW-0025">Alternative splicing</keyword>
<keyword id="KW-0072">Autophagy</keyword>
<keyword id="KW-0175">Coiled coil</keyword>
<keyword id="KW-0968">Cytoplasmic vesicle</keyword>
<keyword id="KW-0458">Lysosome</keyword>
<keyword id="KW-0479">Metal-binding</keyword>
<keyword id="KW-1185">Reference proteome</keyword>
<keyword id="KW-0862">Zinc</keyword>
<keyword id="KW-0863">Zinc-finger</keyword>
<name>RUFY4_MOUSE</name>
<proteinExistence type="evidence at protein level"/>
<accession>Q3TYX8</accession>
<accession>B2RX43</accession>
<accession>D3YY30</accession>
<protein>
    <recommendedName>
        <fullName>RUN and FYVE domain-containing protein 4</fullName>
    </recommendedName>
</protein>
<comment type="function">
    <text evidence="1 7">ARL8 effector that promotes the coupling of endolysosomes to dynein-dynactin for retrograde transport along microtubules. Acts by binding both GTP-bound ARL8 and dynein-dynactin. In nonneuronal cells, promotes concentration of endolysosomes in the juxtanuclear area. In hippocampal neurons, drives retrograde transport of endolysosomes from the axon to the soma (By similarity). Positive regulator of macroautophagy in dendritic cells. Increases autophagic flux, probably by stimulating both autophagosome formation and facilitating tethering with lysosomes. Binds to phosphatidylinositol 3-phosphate (PtdIns3P) through its FYVE-type zinc finger (By similarity). Positive regulator of osteosclast bone-resorbing activity, possibly by promoting late endosome-lysosome fusion by acting as an adapter protein between RAB7A on late endosomes and LAMP2 on primary lysosomes (PubMed:38744829).</text>
</comment>
<comment type="subunit">
    <text evidence="1 7">Forms homodimers (via coiled coil domain) (PubMed:38744829). Forms a ternary complex with RAB7A and LAMP2; the interaction with RAB7A is mediated by RUFY4 (via RUN and coiled coil domains) (PubMed:38744829). Interacts with GTP-, but not GDP-bound ARL8A and ARL8B. Interacts with dynactin/DCTN1 and the dynein intermediate chain DYNC1I1/2 (By similarity).</text>
</comment>
<comment type="subcellular location">
    <subcellularLocation>
        <location evidence="1">Cytoplasmic vesicle</location>
        <location evidence="1">Autophagosome</location>
    </subcellularLocation>
    <subcellularLocation>
        <location evidence="1">Lysosome</location>
    </subcellularLocation>
    <text evidence="1">In the presence of ARL8, recruited to endolysosomes.</text>
</comment>
<comment type="alternative products">
    <event type="alternative splicing"/>
    <isoform>
        <id>Q3TYX8-1</id>
        <name>1</name>
        <sequence type="displayed"/>
    </isoform>
    <isoform>
        <id>Q3TYX8-2</id>
        <name>2</name>
        <sequence type="described" ref="VSP_035817"/>
    </isoform>
</comment>
<comment type="tissue specificity">
    <molecule>Isoform 1</molecule>
    <text evidence="6">Expressed in dendritic cells.</text>
</comment>
<comment type="induction">
    <text evidence="6">Up-regulated by IL4/interleukin-4 in bone marrow-derived dendritic cells.</text>
</comment>
<comment type="domain">
    <text evidence="1 7">The RUN domain and the FYVE-type zinc finger are essential for its function in the positive regulation of macroautophagy (By similarity). The RUN domain is involved in interaction with RAB7A and LAMP2, while the FYVE-type zinc finger is required for binding to phosphatidylinositol 3-phosphate (PubMed:38744829).</text>
</comment>
<comment type="disruption phenotype">
    <text evidence="7">Knockout mice exhibit increased trabecular bone mass due to impaired bone resorption, a phenotype associated with reduced lysosomal maturation, lysosome trafficking to the membrane, ruffled border formation and cathepsin K/CTSK secretion.</text>
</comment>
<gene>
    <name type="primary">Rufy4</name>
</gene>
<feature type="chain" id="PRO_0000284672" description="RUN and FYVE domain-containing protein 4">
    <location>
        <begin position="1"/>
        <end position="563"/>
    </location>
</feature>
<feature type="domain" description="RUN" evidence="4">
    <location>
        <begin position="33"/>
        <end position="166"/>
    </location>
</feature>
<feature type="zinc finger region" description="FYVE-type" evidence="3">
    <location>
        <begin position="428"/>
        <end position="558"/>
    </location>
</feature>
<feature type="region of interest" description="Disordered" evidence="5">
    <location>
        <begin position="176"/>
        <end position="327"/>
    </location>
</feature>
<feature type="region of interest" description="Disordered" evidence="5">
    <location>
        <begin position="375"/>
        <end position="397"/>
    </location>
</feature>
<feature type="coiled-coil region" evidence="2">
    <location>
        <begin position="421"/>
        <end position="462"/>
    </location>
</feature>
<feature type="compositionally biased region" description="Basic and acidic residues" evidence="5">
    <location>
        <begin position="196"/>
        <end position="205"/>
    </location>
</feature>
<feature type="compositionally biased region" description="Basic and acidic residues" evidence="5">
    <location>
        <begin position="263"/>
        <end position="284"/>
    </location>
</feature>
<feature type="compositionally biased region" description="Polar residues" evidence="5">
    <location>
        <begin position="285"/>
        <end position="295"/>
    </location>
</feature>
<feature type="compositionally biased region" description="Basic and acidic residues" evidence="5">
    <location>
        <begin position="297"/>
        <end position="312"/>
    </location>
</feature>
<feature type="compositionally biased region" description="Polar residues" evidence="5">
    <location>
        <begin position="385"/>
        <end position="396"/>
    </location>
</feature>
<feature type="binding site" evidence="3">
    <location>
        <position position="513"/>
    </location>
    <ligand>
        <name>Zn(2+)</name>
        <dbReference type="ChEBI" id="CHEBI:29105"/>
        <label>1</label>
    </ligand>
</feature>
<feature type="binding site" evidence="3">
    <location>
        <position position="516"/>
    </location>
    <ligand>
        <name>Zn(2+)</name>
        <dbReference type="ChEBI" id="CHEBI:29105"/>
        <label>1</label>
    </ligand>
</feature>
<feature type="binding site" evidence="3">
    <location>
        <position position="529"/>
    </location>
    <ligand>
        <name>Zn(2+)</name>
        <dbReference type="ChEBI" id="CHEBI:29105"/>
        <label>2</label>
    </ligand>
</feature>
<feature type="binding site" evidence="3">
    <location>
        <position position="532"/>
    </location>
    <ligand>
        <name>Zn(2+)</name>
        <dbReference type="ChEBI" id="CHEBI:29105"/>
        <label>2</label>
    </ligand>
</feature>
<feature type="binding site" evidence="3">
    <location>
        <position position="537"/>
    </location>
    <ligand>
        <name>Zn(2+)</name>
        <dbReference type="ChEBI" id="CHEBI:29105"/>
        <label>1</label>
    </ligand>
</feature>
<feature type="binding site" evidence="3">
    <location>
        <position position="540"/>
    </location>
    <ligand>
        <name>Zn(2+)</name>
        <dbReference type="ChEBI" id="CHEBI:29105"/>
        <label>1</label>
    </ligand>
</feature>
<feature type="binding site" evidence="3">
    <location>
        <position position="551"/>
    </location>
    <ligand>
        <name>Zn(2+)</name>
        <dbReference type="ChEBI" id="CHEBI:29105"/>
        <label>2</label>
    </ligand>
</feature>
<feature type="binding site" evidence="3">
    <location>
        <position position="554"/>
    </location>
    <ligand>
        <name>Zn(2+)</name>
        <dbReference type="ChEBI" id="CHEBI:29105"/>
        <label>2</label>
    </ligand>
</feature>
<feature type="splice variant" id="VSP_035817" description="In isoform 2." evidence="8">
    <location>
        <begin position="1"/>
        <end position="84"/>
    </location>
</feature>
<feature type="sequence conflict" description="In Ref. 3; AAI50908/AAI50911." evidence="9" ref="3">
    <original>E</original>
    <variation>D</variation>
    <location>
        <position position="34"/>
    </location>
</feature>
<feature type="sequence conflict" description="In Ref. 3; AAI50908/AAI50911/BAE34432." evidence="9" ref="3">
    <original>A</original>
    <variation>P</variation>
    <location>
        <position position="141"/>
    </location>
</feature>
<sequence>MANNGTILKISRSLKNAVSAILQGYGDGQEPVTETSAELHRLCGCLELLLQFDQKEQRSFLGARKDYWDFLFTALRRHRGYTEQMSFICSQDKLKTSLGKGRAFIRLCLARGQLAESMQLCLLNPQLTREWYGPRSPLLCAELQEDILDSLYALNGVAFNLDLQRPDLDEAWPMFSESRCSSPSRTGKRRPGKPKGFPEEVRCSRGEQLQEPDTGGTSCLQDATREDRTPDLCKPLQPSHLPTFLEEKREDSRSLSCPQSTWETEREGFQLDQKDGGPKPRKFLENSTASIQQQRSRAKDVKMQLTGRKVEGKGSLSGTEDQRTTEGIQKRAADWDLGQGLMAPGLQGREDAELGYRCEWNQPDVLRQSWVLGTKKSSPTEKPQEWTGVTSGTMQEDGSEVPLQQEVIKDPGYGLQLAKEQAQCQEQLRAQEAELQALQEQLSRCQKERALLQVKLEQKQQEAERRDAMYQTELEGQRDLVQAMKRRVLELIHEKDLQWQRLQQLSTVAPGHCIGCNKVFRRLSRRYPCRLCGGLVCHACSVDYKKRERCCPTCAQQEEIQDT</sequence>